<protein>
    <recommendedName>
        <fullName evidence="1">Large ribosomal subunit protein uL11</fullName>
    </recommendedName>
    <alternativeName>
        <fullName evidence="2">50S ribosomal protein L11</fullName>
    </alternativeName>
</protein>
<accession>B7LA74</accession>
<dbReference type="EMBL" id="CU928145">
    <property type="protein sequence ID" value="CAV01221.1"/>
    <property type="molecule type" value="Genomic_DNA"/>
</dbReference>
<dbReference type="RefSeq" id="WP_001085926.1">
    <property type="nucleotide sequence ID" value="NZ_CP028304.1"/>
</dbReference>
<dbReference type="SMR" id="B7LA74"/>
<dbReference type="GeneID" id="93777911"/>
<dbReference type="KEGG" id="eck:EC55989_4467"/>
<dbReference type="HOGENOM" id="CLU_074237_2_0_6"/>
<dbReference type="Proteomes" id="UP000000746">
    <property type="component" value="Chromosome"/>
</dbReference>
<dbReference type="GO" id="GO:0022625">
    <property type="term" value="C:cytosolic large ribosomal subunit"/>
    <property type="evidence" value="ECO:0007669"/>
    <property type="project" value="TreeGrafter"/>
</dbReference>
<dbReference type="GO" id="GO:0070180">
    <property type="term" value="F:large ribosomal subunit rRNA binding"/>
    <property type="evidence" value="ECO:0007669"/>
    <property type="project" value="UniProtKB-UniRule"/>
</dbReference>
<dbReference type="GO" id="GO:0003735">
    <property type="term" value="F:structural constituent of ribosome"/>
    <property type="evidence" value="ECO:0007669"/>
    <property type="project" value="InterPro"/>
</dbReference>
<dbReference type="GO" id="GO:0006412">
    <property type="term" value="P:translation"/>
    <property type="evidence" value="ECO:0007669"/>
    <property type="project" value="UniProtKB-UniRule"/>
</dbReference>
<dbReference type="CDD" id="cd00349">
    <property type="entry name" value="Ribosomal_L11"/>
    <property type="match status" value="1"/>
</dbReference>
<dbReference type="FunFam" id="1.10.10.250:FF:000001">
    <property type="entry name" value="50S ribosomal protein L11"/>
    <property type="match status" value="1"/>
</dbReference>
<dbReference type="FunFam" id="3.30.1550.10:FF:000001">
    <property type="entry name" value="50S ribosomal protein L11"/>
    <property type="match status" value="1"/>
</dbReference>
<dbReference type="Gene3D" id="1.10.10.250">
    <property type="entry name" value="Ribosomal protein L11, C-terminal domain"/>
    <property type="match status" value="1"/>
</dbReference>
<dbReference type="Gene3D" id="3.30.1550.10">
    <property type="entry name" value="Ribosomal protein L11/L12, N-terminal domain"/>
    <property type="match status" value="1"/>
</dbReference>
<dbReference type="HAMAP" id="MF_00736">
    <property type="entry name" value="Ribosomal_uL11"/>
    <property type="match status" value="1"/>
</dbReference>
<dbReference type="InterPro" id="IPR000911">
    <property type="entry name" value="Ribosomal_uL11"/>
</dbReference>
<dbReference type="InterPro" id="IPR006519">
    <property type="entry name" value="Ribosomal_uL11_bac-typ"/>
</dbReference>
<dbReference type="InterPro" id="IPR020783">
    <property type="entry name" value="Ribosomal_uL11_C"/>
</dbReference>
<dbReference type="InterPro" id="IPR036769">
    <property type="entry name" value="Ribosomal_uL11_C_sf"/>
</dbReference>
<dbReference type="InterPro" id="IPR020785">
    <property type="entry name" value="Ribosomal_uL11_CS"/>
</dbReference>
<dbReference type="InterPro" id="IPR020784">
    <property type="entry name" value="Ribosomal_uL11_N"/>
</dbReference>
<dbReference type="InterPro" id="IPR036796">
    <property type="entry name" value="Ribosomal_uL11_N_sf"/>
</dbReference>
<dbReference type="NCBIfam" id="TIGR01632">
    <property type="entry name" value="L11_bact"/>
    <property type="match status" value="1"/>
</dbReference>
<dbReference type="PANTHER" id="PTHR11661">
    <property type="entry name" value="60S RIBOSOMAL PROTEIN L12"/>
    <property type="match status" value="1"/>
</dbReference>
<dbReference type="PANTHER" id="PTHR11661:SF1">
    <property type="entry name" value="LARGE RIBOSOMAL SUBUNIT PROTEIN UL11M"/>
    <property type="match status" value="1"/>
</dbReference>
<dbReference type="Pfam" id="PF00298">
    <property type="entry name" value="Ribosomal_L11"/>
    <property type="match status" value="1"/>
</dbReference>
<dbReference type="Pfam" id="PF03946">
    <property type="entry name" value="Ribosomal_L11_N"/>
    <property type="match status" value="1"/>
</dbReference>
<dbReference type="SMART" id="SM00649">
    <property type="entry name" value="RL11"/>
    <property type="match status" value="1"/>
</dbReference>
<dbReference type="SUPFAM" id="SSF54747">
    <property type="entry name" value="Ribosomal L11/L12e N-terminal domain"/>
    <property type="match status" value="1"/>
</dbReference>
<dbReference type="SUPFAM" id="SSF46906">
    <property type="entry name" value="Ribosomal protein L11, C-terminal domain"/>
    <property type="match status" value="1"/>
</dbReference>
<dbReference type="PROSITE" id="PS00359">
    <property type="entry name" value="RIBOSOMAL_L11"/>
    <property type="match status" value="1"/>
</dbReference>
<evidence type="ECO:0000255" key="1">
    <source>
        <dbReference type="HAMAP-Rule" id="MF_00736"/>
    </source>
</evidence>
<evidence type="ECO:0000305" key="2"/>
<feature type="chain" id="PRO_1000195627" description="Large ribosomal subunit protein uL11">
    <location>
        <begin position="1"/>
        <end position="142"/>
    </location>
</feature>
<keyword id="KW-0488">Methylation</keyword>
<keyword id="KW-1185">Reference proteome</keyword>
<keyword id="KW-0687">Ribonucleoprotein</keyword>
<keyword id="KW-0689">Ribosomal protein</keyword>
<keyword id="KW-0694">RNA-binding</keyword>
<keyword id="KW-0699">rRNA-binding</keyword>
<organism>
    <name type="scientific">Escherichia coli (strain 55989 / EAEC)</name>
    <dbReference type="NCBI Taxonomy" id="585055"/>
    <lineage>
        <taxon>Bacteria</taxon>
        <taxon>Pseudomonadati</taxon>
        <taxon>Pseudomonadota</taxon>
        <taxon>Gammaproteobacteria</taxon>
        <taxon>Enterobacterales</taxon>
        <taxon>Enterobacteriaceae</taxon>
        <taxon>Escherichia</taxon>
    </lineage>
</organism>
<comment type="function">
    <text evidence="1">Forms part of the ribosomal stalk which helps the ribosome interact with GTP-bound translation factors.</text>
</comment>
<comment type="subunit">
    <text evidence="1">Part of the ribosomal stalk of the 50S ribosomal subunit. Interacts with L10 and the large rRNA to form the base of the stalk. L10 forms an elongated spine to which L12 dimers bind in a sequential fashion forming a multimeric L10(L12)X complex.</text>
</comment>
<comment type="PTM">
    <text evidence="1">One or more lysine residues are methylated.</text>
</comment>
<comment type="similarity">
    <text evidence="1">Belongs to the universal ribosomal protein uL11 family.</text>
</comment>
<name>RL11_ECO55</name>
<sequence length="142" mass="14875">MAKKVQAYVKLQVAAGMANPSPPVGPALGQQGVNIMEFCKAFNAKTDSIEKGLPIPVVITVYADRSFTFVTKTPPAAVLLKKAAGIKSGSGKPNKDKVGKISRAQLQEIAQTKAADMTGADIEAMTRSIEGTARSMGLVVED</sequence>
<proteinExistence type="inferred from homology"/>
<gene>
    <name evidence="1" type="primary">rplK</name>
    <name type="ordered locus">EC55989_4467</name>
</gene>
<reference key="1">
    <citation type="journal article" date="2009" name="PLoS Genet.">
        <title>Organised genome dynamics in the Escherichia coli species results in highly diverse adaptive paths.</title>
        <authorList>
            <person name="Touchon M."/>
            <person name="Hoede C."/>
            <person name="Tenaillon O."/>
            <person name="Barbe V."/>
            <person name="Baeriswyl S."/>
            <person name="Bidet P."/>
            <person name="Bingen E."/>
            <person name="Bonacorsi S."/>
            <person name="Bouchier C."/>
            <person name="Bouvet O."/>
            <person name="Calteau A."/>
            <person name="Chiapello H."/>
            <person name="Clermont O."/>
            <person name="Cruveiller S."/>
            <person name="Danchin A."/>
            <person name="Diard M."/>
            <person name="Dossat C."/>
            <person name="Karoui M.E."/>
            <person name="Frapy E."/>
            <person name="Garry L."/>
            <person name="Ghigo J.M."/>
            <person name="Gilles A.M."/>
            <person name="Johnson J."/>
            <person name="Le Bouguenec C."/>
            <person name="Lescat M."/>
            <person name="Mangenot S."/>
            <person name="Martinez-Jehanne V."/>
            <person name="Matic I."/>
            <person name="Nassif X."/>
            <person name="Oztas S."/>
            <person name="Petit M.A."/>
            <person name="Pichon C."/>
            <person name="Rouy Z."/>
            <person name="Ruf C.S."/>
            <person name="Schneider D."/>
            <person name="Tourret J."/>
            <person name="Vacherie B."/>
            <person name="Vallenet D."/>
            <person name="Medigue C."/>
            <person name="Rocha E.P.C."/>
            <person name="Denamur E."/>
        </authorList>
    </citation>
    <scope>NUCLEOTIDE SEQUENCE [LARGE SCALE GENOMIC DNA]</scope>
    <source>
        <strain>55989 / EAEC</strain>
    </source>
</reference>